<reference key="1">
    <citation type="journal article" date="1998" name="Science">
        <title>Genome sequence of the nematode C. elegans: a platform for investigating biology.</title>
        <authorList>
            <consortium name="The C. elegans sequencing consortium"/>
        </authorList>
    </citation>
    <scope>NUCLEOTIDE SEQUENCE [LARGE SCALE GENOMIC DNA]</scope>
    <source>
        <strain>Bristol N2</strain>
    </source>
</reference>
<reference key="2">
    <citation type="journal article" date="2021" name="Biochim. Biophys. Acta">
        <title>Kinetic characterization and thermostability of C. elegans cytoplasmic and mitochondrial malate dehydrogenases.</title>
        <authorList>
            <person name="Thomas M.J."/>
            <person name="Cassidy E.R."/>
            <person name="Robinson D.S."/>
            <person name="Walstrom K.M."/>
        </authorList>
    </citation>
    <scope>FUNCTION</scope>
    <scope>CATALYTIC ACTIVITY</scope>
    <scope>BIOPHYSICOCHEMICAL PROPERTIES</scope>
</reference>
<name>MDHM_CAEEL</name>
<comment type="function">
    <text evidence="5">Catalyzes the reversible conversion of (S)-malate to oxaloacetate in the citric acid cycle.</text>
</comment>
<comment type="catalytic activity">
    <reaction evidence="4 5">
        <text>(S)-malate + NAD(+) = oxaloacetate + NADH + H(+)</text>
        <dbReference type="Rhea" id="RHEA:21432"/>
        <dbReference type="ChEBI" id="CHEBI:15378"/>
        <dbReference type="ChEBI" id="CHEBI:15589"/>
        <dbReference type="ChEBI" id="CHEBI:16452"/>
        <dbReference type="ChEBI" id="CHEBI:57540"/>
        <dbReference type="ChEBI" id="CHEBI:57945"/>
        <dbReference type="EC" id="1.1.1.37"/>
    </reaction>
</comment>
<comment type="biophysicochemical properties">
    <kinetics>
        <KM evidence="5">52 uM for oxaloacetate (at 24 degrees Celsius and pH 7.5)</KM>
        <KM evidence="5">42 uM for oxaloacetate (at 24 degrees Celsius and pH 7.5, endogenous protein)</KM>
        <KM evidence="5">107 uM for NADH (at 24 degrees Celsius and pH 7.5)</KM>
        <text>kcat is 460 sec(-1) with NADH as substrate (at 24 degrees Celsius and pH 7.5).</text>
    </kinetics>
    <phDependence>
        <text evidence="5">Optimum pH is between 6-8.5.</text>
    </phDependence>
    <temperatureDependence>
        <text evidence="5">Optimum temperature is 35 degrees Celsius.</text>
    </temperatureDependence>
</comment>
<comment type="subunit">
    <text evidence="3">Homodimer.</text>
</comment>
<comment type="subcellular location">
    <subcellularLocation>
        <location evidence="2">Mitochondrion matrix</location>
    </subcellularLocation>
</comment>
<comment type="similarity">
    <text evidence="7">Belongs to the LDH/MDH superfamily. MDH type 1 family.</text>
</comment>
<evidence type="ECO:0000250" key="1">
    <source>
        <dbReference type="UniProtKB" id="P00346"/>
    </source>
</evidence>
<evidence type="ECO:0000250" key="2">
    <source>
        <dbReference type="UniProtKB" id="P04636"/>
    </source>
</evidence>
<evidence type="ECO:0000250" key="3">
    <source>
        <dbReference type="UniProtKB" id="P40926"/>
    </source>
</evidence>
<evidence type="ECO:0000255" key="4">
    <source>
        <dbReference type="PROSITE-ProRule" id="PRU10004"/>
    </source>
</evidence>
<evidence type="ECO:0000269" key="5">
    <source>
    </source>
</evidence>
<evidence type="ECO:0000303" key="6">
    <source>
    </source>
</evidence>
<evidence type="ECO:0000305" key="7"/>
<evidence type="ECO:0000312" key="8">
    <source>
        <dbReference type="WormBase" id="F20H11.3"/>
    </source>
</evidence>
<proteinExistence type="evidence at protein level"/>
<organism>
    <name type="scientific">Caenorhabditis elegans</name>
    <dbReference type="NCBI Taxonomy" id="6239"/>
    <lineage>
        <taxon>Eukaryota</taxon>
        <taxon>Metazoa</taxon>
        <taxon>Ecdysozoa</taxon>
        <taxon>Nematoda</taxon>
        <taxon>Chromadorea</taxon>
        <taxon>Rhabditida</taxon>
        <taxon>Rhabditina</taxon>
        <taxon>Rhabditomorpha</taxon>
        <taxon>Rhabditoidea</taxon>
        <taxon>Rhabditidae</taxon>
        <taxon>Peloderinae</taxon>
        <taxon>Caenorhabditis</taxon>
    </lineage>
</organism>
<sequence>MSLPAKTLVQAAANSGLRAVSVRHSSQAPKVALLGAAGGIGQPLGLLLKQDPLVAHLALYDVVNTPGVAADLSHIDSNAKVTAHTGPKELYAAVENADVIVIPAGVPRKPGMTRDDLFNTNAGIVRDLAAVIAKASPKALIAIITNPVNSTVPIASEVLKKAGVYDPKRVFGVTTLDVVRSQAFVSELKGHDASKTVVPVVGGHAGITIIPLLSQVKPSTKFSEEEISKLTPRIQDAGTEVVNAKAGAGSATLSMALAGARFANALVRGIKGEKNVQCAYVASDAVKGVEYFSTPVELGPNGVEKILGVGKVSAYEQKLIDASVPELNKNIAKGVAFVKGN</sequence>
<protein>
    <recommendedName>
        <fullName evidence="6">Malate dehydrogenase, mitochondrial</fullName>
        <ecNumber evidence="4 5">1.1.1.37</ecNumber>
    </recommendedName>
</protein>
<accession>O02640</accession>
<keyword id="KW-0496">Mitochondrion</keyword>
<keyword id="KW-0520">NAD</keyword>
<keyword id="KW-0560">Oxidoreductase</keyword>
<keyword id="KW-1185">Reference proteome</keyword>
<keyword id="KW-0809">Transit peptide</keyword>
<keyword id="KW-0816">Tricarboxylic acid cycle</keyword>
<feature type="transit peptide" description="Mitochondrion">
    <location>
        <begin position="1"/>
        <end status="unknown"/>
    </location>
</feature>
<feature type="chain" id="PRO_0000018632" description="Malate dehydrogenase, mitochondrial">
    <location>
        <begin status="unknown"/>
        <end position="341"/>
    </location>
</feature>
<feature type="active site" description="Proton acceptor" evidence="1">
    <location>
        <position position="204"/>
    </location>
</feature>
<feature type="binding site" evidence="3">
    <location>
        <begin position="35"/>
        <end position="41"/>
    </location>
    <ligand>
        <name>NAD(+)</name>
        <dbReference type="ChEBI" id="CHEBI:57540"/>
    </ligand>
</feature>
<feature type="binding site" evidence="3">
    <location>
        <position position="61"/>
    </location>
    <ligand>
        <name>NAD(+)</name>
        <dbReference type="ChEBI" id="CHEBI:57540"/>
    </ligand>
</feature>
<feature type="binding site" evidence="4">
    <location>
        <position position="108"/>
    </location>
    <ligand>
        <name>substrate</name>
    </ligand>
</feature>
<feature type="binding site" evidence="4">
    <location>
        <position position="114"/>
    </location>
    <ligand>
        <name>substrate</name>
    </ligand>
</feature>
<feature type="binding site" evidence="3">
    <location>
        <position position="121"/>
    </location>
    <ligand>
        <name>NAD(+)</name>
        <dbReference type="ChEBI" id="CHEBI:57540"/>
    </ligand>
</feature>
<feature type="binding site" evidence="3">
    <location>
        <begin position="144"/>
        <end position="146"/>
    </location>
    <ligand>
        <name>NAD(+)</name>
        <dbReference type="ChEBI" id="CHEBI:57540"/>
    </ligand>
</feature>
<feature type="binding site" evidence="4">
    <location>
        <position position="146"/>
    </location>
    <ligand>
        <name>substrate</name>
    </ligand>
</feature>
<feature type="binding site" evidence="4">
    <location>
        <position position="180"/>
    </location>
    <ligand>
        <name>substrate</name>
    </ligand>
</feature>
<feature type="binding site" evidence="3">
    <location>
        <position position="255"/>
    </location>
    <ligand>
        <name>NAD(+)</name>
        <dbReference type="ChEBI" id="CHEBI:57540"/>
    </ligand>
</feature>
<gene>
    <name evidence="6 8" type="primary">mdh-2</name>
    <name evidence="8" type="ORF">F20H11.3</name>
</gene>
<dbReference type="EC" id="1.1.1.37" evidence="4 5"/>
<dbReference type="EMBL" id="BX284603">
    <property type="protein sequence ID" value="CCD69776.1"/>
    <property type="molecule type" value="Genomic_DNA"/>
</dbReference>
<dbReference type="PIR" id="C88486">
    <property type="entry name" value="C88486"/>
</dbReference>
<dbReference type="RefSeq" id="NP_498457.1">
    <property type="nucleotide sequence ID" value="NM_066056.7"/>
</dbReference>
<dbReference type="SMR" id="O02640"/>
<dbReference type="BioGRID" id="41153">
    <property type="interactions" value="44"/>
</dbReference>
<dbReference type="FunCoup" id="O02640">
    <property type="interactions" value="2263"/>
</dbReference>
<dbReference type="STRING" id="6239.F20H11.3.1"/>
<dbReference type="PaxDb" id="6239-F20H11.3"/>
<dbReference type="PeptideAtlas" id="O02640"/>
<dbReference type="EnsemblMetazoa" id="F20H11.3.1">
    <property type="protein sequence ID" value="F20H11.3.1"/>
    <property type="gene ID" value="WBGene00003162"/>
</dbReference>
<dbReference type="GeneID" id="175936"/>
<dbReference type="KEGG" id="cel:CELE_F20H11.3"/>
<dbReference type="UCSC" id="F20H11.3.1">
    <property type="organism name" value="c. elegans"/>
</dbReference>
<dbReference type="AGR" id="WB:WBGene00003162"/>
<dbReference type="CTD" id="175936"/>
<dbReference type="WormBase" id="F20H11.3">
    <property type="protein sequence ID" value="CE09512"/>
    <property type="gene ID" value="WBGene00003162"/>
    <property type="gene designation" value="mdh-2"/>
</dbReference>
<dbReference type="eggNOG" id="KOG1494">
    <property type="taxonomic scope" value="Eukaryota"/>
</dbReference>
<dbReference type="GeneTree" id="ENSGT00390000016686"/>
<dbReference type="HOGENOM" id="CLU_047181_1_0_1"/>
<dbReference type="InParanoid" id="O02640"/>
<dbReference type="OMA" id="ASCAEYI"/>
<dbReference type="OrthoDB" id="755699at2759"/>
<dbReference type="PhylomeDB" id="O02640"/>
<dbReference type="Reactome" id="R-CEL-71403">
    <property type="pathway name" value="Citric acid cycle (TCA cycle)"/>
</dbReference>
<dbReference type="Reactome" id="R-CEL-9837999">
    <property type="pathway name" value="Mitochondrial protein degradation"/>
</dbReference>
<dbReference type="Reactome" id="R-CEL-9856872">
    <property type="pathway name" value="Malate-aspartate shuttle"/>
</dbReference>
<dbReference type="PRO" id="PR:O02640"/>
<dbReference type="Proteomes" id="UP000001940">
    <property type="component" value="Chromosome III"/>
</dbReference>
<dbReference type="Bgee" id="WBGene00003162">
    <property type="expression patterns" value="Expressed in adult organism and 4 other cell types or tissues"/>
</dbReference>
<dbReference type="GO" id="GO:0005737">
    <property type="term" value="C:cytoplasm"/>
    <property type="evidence" value="ECO:0000318"/>
    <property type="project" value="GO_Central"/>
</dbReference>
<dbReference type="GO" id="GO:0005759">
    <property type="term" value="C:mitochondrial matrix"/>
    <property type="evidence" value="ECO:0007669"/>
    <property type="project" value="UniProtKB-SubCell"/>
</dbReference>
<dbReference type="GO" id="GO:0005739">
    <property type="term" value="C:mitochondrion"/>
    <property type="evidence" value="ECO:0007005"/>
    <property type="project" value="WormBase"/>
</dbReference>
<dbReference type="GO" id="GO:0030060">
    <property type="term" value="F:L-malate dehydrogenase (NAD+) activity"/>
    <property type="evidence" value="ECO:0000314"/>
    <property type="project" value="UniProtKB"/>
</dbReference>
<dbReference type="GO" id="GO:0006108">
    <property type="term" value="P:malate metabolic process"/>
    <property type="evidence" value="ECO:0000314"/>
    <property type="project" value="UniProtKB"/>
</dbReference>
<dbReference type="GO" id="GO:0006099">
    <property type="term" value="P:tricarboxylic acid cycle"/>
    <property type="evidence" value="ECO:0000318"/>
    <property type="project" value="GO_Central"/>
</dbReference>
<dbReference type="CDD" id="cd01337">
    <property type="entry name" value="MDH_glyoxysomal_mitochondrial"/>
    <property type="match status" value="1"/>
</dbReference>
<dbReference type="FunFam" id="3.40.50.720:FF:000013">
    <property type="entry name" value="Malate dehydrogenase"/>
    <property type="match status" value="1"/>
</dbReference>
<dbReference type="FunFam" id="3.90.110.10:FF:000001">
    <property type="entry name" value="Malate dehydrogenase"/>
    <property type="match status" value="1"/>
</dbReference>
<dbReference type="Gene3D" id="3.90.110.10">
    <property type="entry name" value="Lactate dehydrogenase/glycoside hydrolase, family 4, C-terminal"/>
    <property type="match status" value="1"/>
</dbReference>
<dbReference type="Gene3D" id="3.40.50.720">
    <property type="entry name" value="NAD(P)-binding Rossmann-like Domain"/>
    <property type="match status" value="1"/>
</dbReference>
<dbReference type="InterPro" id="IPR001557">
    <property type="entry name" value="L-lactate/malate_DH"/>
</dbReference>
<dbReference type="InterPro" id="IPR022383">
    <property type="entry name" value="Lactate/malate_DH_C"/>
</dbReference>
<dbReference type="InterPro" id="IPR001236">
    <property type="entry name" value="Lactate/malate_DH_N"/>
</dbReference>
<dbReference type="InterPro" id="IPR015955">
    <property type="entry name" value="Lactate_DH/Glyco_Ohase_4_C"/>
</dbReference>
<dbReference type="InterPro" id="IPR001252">
    <property type="entry name" value="Malate_DH_AS"/>
</dbReference>
<dbReference type="InterPro" id="IPR010097">
    <property type="entry name" value="Malate_DH_type1"/>
</dbReference>
<dbReference type="InterPro" id="IPR036291">
    <property type="entry name" value="NAD(P)-bd_dom_sf"/>
</dbReference>
<dbReference type="NCBIfam" id="TIGR01772">
    <property type="entry name" value="MDH_euk_gproteo"/>
    <property type="match status" value="1"/>
</dbReference>
<dbReference type="PANTHER" id="PTHR11540">
    <property type="entry name" value="MALATE AND LACTATE DEHYDROGENASE"/>
    <property type="match status" value="1"/>
</dbReference>
<dbReference type="PANTHER" id="PTHR11540:SF16">
    <property type="entry name" value="MALATE DEHYDROGENASE, MITOCHONDRIAL"/>
    <property type="match status" value="1"/>
</dbReference>
<dbReference type="Pfam" id="PF02866">
    <property type="entry name" value="Ldh_1_C"/>
    <property type="match status" value="1"/>
</dbReference>
<dbReference type="Pfam" id="PF00056">
    <property type="entry name" value="Ldh_1_N"/>
    <property type="match status" value="1"/>
</dbReference>
<dbReference type="PIRSF" id="PIRSF000102">
    <property type="entry name" value="Lac_mal_DH"/>
    <property type="match status" value="1"/>
</dbReference>
<dbReference type="SUPFAM" id="SSF56327">
    <property type="entry name" value="LDH C-terminal domain-like"/>
    <property type="match status" value="1"/>
</dbReference>
<dbReference type="SUPFAM" id="SSF51735">
    <property type="entry name" value="NAD(P)-binding Rossmann-fold domains"/>
    <property type="match status" value="1"/>
</dbReference>
<dbReference type="PROSITE" id="PS00068">
    <property type="entry name" value="MDH"/>
    <property type="match status" value="1"/>
</dbReference>